<gene>
    <name evidence="1" type="primary">rnhA</name>
    <name type="ordered locus">Fphi_1519</name>
</gene>
<feature type="chain" id="PRO_1000074646" description="Ribonuclease H">
    <location>
        <begin position="1"/>
        <end position="152"/>
    </location>
</feature>
<feature type="domain" description="RNase H type-1" evidence="2">
    <location>
        <begin position="6"/>
        <end position="147"/>
    </location>
</feature>
<feature type="binding site" evidence="1">
    <location>
        <position position="15"/>
    </location>
    <ligand>
        <name>Mg(2+)</name>
        <dbReference type="ChEBI" id="CHEBI:18420"/>
        <label>1</label>
    </ligand>
</feature>
<feature type="binding site" evidence="1">
    <location>
        <position position="15"/>
    </location>
    <ligand>
        <name>Mg(2+)</name>
        <dbReference type="ChEBI" id="CHEBI:18420"/>
        <label>2</label>
    </ligand>
</feature>
<feature type="binding site" evidence="1">
    <location>
        <position position="53"/>
    </location>
    <ligand>
        <name>Mg(2+)</name>
        <dbReference type="ChEBI" id="CHEBI:18420"/>
        <label>1</label>
    </ligand>
</feature>
<feature type="binding site" evidence="1">
    <location>
        <position position="75"/>
    </location>
    <ligand>
        <name>Mg(2+)</name>
        <dbReference type="ChEBI" id="CHEBI:18420"/>
        <label>1</label>
    </ligand>
</feature>
<feature type="binding site" evidence="1">
    <location>
        <position position="139"/>
    </location>
    <ligand>
        <name>Mg(2+)</name>
        <dbReference type="ChEBI" id="CHEBI:18420"/>
        <label>2</label>
    </ligand>
</feature>
<sequence>MGIFTKKNNVIAYTDGACKGNPGIGGWGAILSYNGVDKEISGAEKDTTNNRMELMAAIKTLQALKRKCDITIYTDSKYLQNGINQWLANWKANGWKTAAKKEVKNKDLWQELDSLTTKHNVTWSWVKGHSGNQGNEKADELANKAIAELTGK</sequence>
<accession>B0TZ91</accession>
<name>RNH_FRAP2</name>
<keyword id="KW-0963">Cytoplasm</keyword>
<keyword id="KW-0255">Endonuclease</keyword>
<keyword id="KW-0378">Hydrolase</keyword>
<keyword id="KW-0460">Magnesium</keyword>
<keyword id="KW-0479">Metal-binding</keyword>
<keyword id="KW-0540">Nuclease</keyword>
<reference key="1">
    <citation type="submission" date="2007-12" db="EMBL/GenBank/DDBJ databases">
        <title>Complete sequence of chromosome of Francisella philomiragia subsp. philomiragia ATCC 25017.</title>
        <authorList>
            <consortium name="US DOE Joint Genome Institute"/>
            <person name="Copeland A."/>
            <person name="Lucas S."/>
            <person name="Lapidus A."/>
            <person name="Barry K."/>
            <person name="Detter J.C."/>
            <person name="Glavina del Rio T."/>
            <person name="Hammon N."/>
            <person name="Israni S."/>
            <person name="Dalin E."/>
            <person name="Tice H."/>
            <person name="Pitluck S."/>
            <person name="Chain P."/>
            <person name="Malfatti S."/>
            <person name="Shin M."/>
            <person name="Vergez L."/>
            <person name="Schmutz J."/>
            <person name="Larimer F."/>
            <person name="Land M."/>
            <person name="Hauser L."/>
            <person name="Richardson P."/>
        </authorList>
    </citation>
    <scope>NUCLEOTIDE SEQUENCE [LARGE SCALE GENOMIC DNA]</scope>
    <source>
        <strain>ATCC 25017 / CCUG 19701 / FSC 153 / O#319-036</strain>
    </source>
</reference>
<organism>
    <name type="scientific">Francisella philomiragia subsp. philomiragia (strain ATCC 25017 / CCUG 19701 / FSC 153 / O#319-036)</name>
    <dbReference type="NCBI Taxonomy" id="484022"/>
    <lineage>
        <taxon>Bacteria</taxon>
        <taxon>Pseudomonadati</taxon>
        <taxon>Pseudomonadota</taxon>
        <taxon>Gammaproteobacteria</taxon>
        <taxon>Thiotrichales</taxon>
        <taxon>Francisellaceae</taxon>
        <taxon>Francisella</taxon>
    </lineage>
</organism>
<evidence type="ECO:0000255" key="1">
    <source>
        <dbReference type="HAMAP-Rule" id="MF_00042"/>
    </source>
</evidence>
<evidence type="ECO:0000255" key="2">
    <source>
        <dbReference type="PROSITE-ProRule" id="PRU00408"/>
    </source>
</evidence>
<dbReference type="EC" id="3.1.26.4" evidence="1"/>
<dbReference type="EMBL" id="CP000937">
    <property type="protein sequence ID" value="ABZ87744.1"/>
    <property type="molecule type" value="Genomic_DNA"/>
</dbReference>
<dbReference type="SMR" id="B0TZ91"/>
<dbReference type="KEGG" id="fph:Fphi_1519"/>
<dbReference type="eggNOG" id="COG0328">
    <property type="taxonomic scope" value="Bacteria"/>
</dbReference>
<dbReference type="HOGENOM" id="CLU_030894_6_0_6"/>
<dbReference type="GO" id="GO:0005737">
    <property type="term" value="C:cytoplasm"/>
    <property type="evidence" value="ECO:0007669"/>
    <property type="project" value="UniProtKB-SubCell"/>
</dbReference>
<dbReference type="GO" id="GO:0000287">
    <property type="term" value="F:magnesium ion binding"/>
    <property type="evidence" value="ECO:0007669"/>
    <property type="project" value="UniProtKB-UniRule"/>
</dbReference>
<dbReference type="GO" id="GO:0003676">
    <property type="term" value="F:nucleic acid binding"/>
    <property type="evidence" value="ECO:0007669"/>
    <property type="project" value="InterPro"/>
</dbReference>
<dbReference type="GO" id="GO:0004523">
    <property type="term" value="F:RNA-DNA hybrid ribonuclease activity"/>
    <property type="evidence" value="ECO:0007669"/>
    <property type="project" value="UniProtKB-UniRule"/>
</dbReference>
<dbReference type="GO" id="GO:0043137">
    <property type="term" value="P:DNA replication, removal of RNA primer"/>
    <property type="evidence" value="ECO:0007669"/>
    <property type="project" value="TreeGrafter"/>
</dbReference>
<dbReference type="CDD" id="cd09278">
    <property type="entry name" value="RNase_HI_prokaryote_like"/>
    <property type="match status" value="1"/>
</dbReference>
<dbReference type="FunFam" id="3.30.420.10:FF:000089">
    <property type="entry name" value="Ribonuclease H"/>
    <property type="match status" value="1"/>
</dbReference>
<dbReference type="Gene3D" id="3.30.420.10">
    <property type="entry name" value="Ribonuclease H-like superfamily/Ribonuclease H"/>
    <property type="match status" value="1"/>
</dbReference>
<dbReference type="HAMAP" id="MF_00042">
    <property type="entry name" value="RNase_H"/>
    <property type="match status" value="1"/>
</dbReference>
<dbReference type="InterPro" id="IPR050092">
    <property type="entry name" value="RNase_H"/>
</dbReference>
<dbReference type="InterPro" id="IPR012337">
    <property type="entry name" value="RNaseH-like_sf"/>
</dbReference>
<dbReference type="InterPro" id="IPR002156">
    <property type="entry name" value="RNaseH_domain"/>
</dbReference>
<dbReference type="InterPro" id="IPR036397">
    <property type="entry name" value="RNaseH_sf"/>
</dbReference>
<dbReference type="InterPro" id="IPR022892">
    <property type="entry name" value="RNaseHI"/>
</dbReference>
<dbReference type="NCBIfam" id="NF001236">
    <property type="entry name" value="PRK00203.1"/>
    <property type="match status" value="1"/>
</dbReference>
<dbReference type="PANTHER" id="PTHR10642">
    <property type="entry name" value="RIBONUCLEASE H1"/>
    <property type="match status" value="1"/>
</dbReference>
<dbReference type="PANTHER" id="PTHR10642:SF26">
    <property type="entry name" value="RIBONUCLEASE H1"/>
    <property type="match status" value="1"/>
</dbReference>
<dbReference type="Pfam" id="PF00075">
    <property type="entry name" value="RNase_H"/>
    <property type="match status" value="1"/>
</dbReference>
<dbReference type="SUPFAM" id="SSF53098">
    <property type="entry name" value="Ribonuclease H-like"/>
    <property type="match status" value="1"/>
</dbReference>
<dbReference type="PROSITE" id="PS50879">
    <property type="entry name" value="RNASE_H_1"/>
    <property type="match status" value="1"/>
</dbReference>
<protein>
    <recommendedName>
        <fullName evidence="1">Ribonuclease H</fullName>
        <shortName evidence="1">RNase H</shortName>
        <ecNumber evidence="1">3.1.26.4</ecNumber>
    </recommendedName>
</protein>
<comment type="function">
    <text evidence="1">Endonuclease that specifically degrades the RNA of RNA-DNA hybrids.</text>
</comment>
<comment type="catalytic activity">
    <reaction evidence="1">
        <text>Endonucleolytic cleavage to 5'-phosphomonoester.</text>
        <dbReference type="EC" id="3.1.26.4"/>
    </reaction>
</comment>
<comment type="cofactor">
    <cofactor evidence="1">
        <name>Mg(2+)</name>
        <dbReference type="ChEBI" id="CHEBI:18420"/>
    </cofactor>
    <text evidence="1">Binds 1 Mg(2+) ion per subunit. May bind a second metal ion at a regulatory site, or after substrate binding.</text>
</comment>
<comment type="subunit">
    <text evidence="1">Monomer.</text>
</comment>
<comment type="subcellular location">
    <subcellularLocation>
        <location evidence="1">Cytoplasm</location>
    </subcellularLocation>
</comment>
<comment type="similarity">
    <text evidence="1">Belongs to the RNase H family.</text>
</comment>
<proteinExistence type="inferred from homology"/>